<proteinExistence type="inferred from homology"/>
<dbReference type="EMBL" id="AE017143">
    <property type="protein sequence ID" value="AAP95657.1"/>
    <property type="molecule type" value="Genomic_DNA"/>
</dbReference>
<dbReference type="RefSeq" id="WP_010944709.1">
    <property type="nucleotide sequence ID" value="NC_002940.2"/>
</dbReference>
<dbReference type="SMR" id="Q7VN39"/>
<dbReference type="STRING" id="233412.HD_0747"/>
<dbReference type="KEGG" id="hdu:HD_0747"/>
<dbReference type="eggNOG" id="COG3004">
    <property type="taxonomic scope" value="Bacteria"/>
</dbReference>
<dbReference type="HOGENOM" id="CLU_015803_1_0_6"/>
<dbReference type="OrthoDB" id="9808135at2"/>
<dbReference type="Proteomes" id="UP000001022">
    <property type="component" value="Chromosome"/>
</dbReference>
<dbReference type="GO" id="GO:0005886">
    <property type="term" value="C:plasma membrane"/>
    <property type="evidence" value="ECO:0007669"/>
    <property type="project" value="UniProtKB-SubCell"/>
</dbReference>
<dbReference type="GO" id="GO:0015385">
    <property type="term" value="F:sodium:proton antiporter activity"/>
    <property type="evidence" value="ECO:0007669"/>
    <property type="project" value="TreeGrafter"/>
</dbReference>
<dbReference type="GO" id="GO:0006885">
    <property type="term" value="P:regulation of pH"/>
    <property type="evidence" value="ECO:0007669"/>
    <property type="project" value="InterPro"/>
</dbReference>
<dbReference type="Gene3D" id="1.20.1530.10">
    <property type="entry name" value="Na+/H+ antiporter like domain"/>
    <property type="match status" value="1"/>
</dbReference>
<dbReference type="HAMAP" id="MF_01844">
    <property type="entry name" value="NhaA"/>
    <property type="match status" value="1"/>
</dbReference>
<dbReference type="InterPro" id="IPR023171">
    <property type="entry name" value="Na/H_antiporter_dom_sf"/>
</dbReference>
<dbReference type="InterPro" id="IPR004670">
    <property type="entry name" value="NhaA"/>
</dbReference>
<dbReference type="NCBIfam" id="TIGR00773">
    <property type="entry name" value="NhaA"/>
    <property type="match status" value="1"/>
</dbReference>
<dbReference type="NCBIfam" id="NF007111">
    <property type="entry name" value="PRK09560.1"/>
    <property type="match status" value="1"/>
</dbReference>
<dbReference type="NCBIfam" id="NF007112">
    <property type="entry name" value="PRK09561.1"/>
    <property type="match status" value="1"/>
</dbReference>
<dbReference type="PANTHER" id="PTHR30341:SF0">
    <property type="entry name" value="NA(+)_H(+) ANTIPORTER NHAA"/>
    <property type="match status" value="1"/>
</dbReference>
<dbReference type="PANTHER" id="PTHR30341">
    <property type="entry name" value="SODIUM ION/PROTON ANTIPORTER NHAA-RELATED"/>
    <property type="match status" value="1"/>
</dbReference>
<dbReference type="Pfam" id="PF06965">
    <property type="entry name" value="Na_H_antiport_1"/>
    <property type="match status" value="1"/>
</dbReference>
<name>NHAA_HAEDU</name>
<sequence>MIEKIQKFLKLEAAGGILLLIAALLAMLCANSVFSPYYFEFLQTQVAVKLGAFSIDKPLLMWINDGFMAVFFILVGMEVKRELLEGSLSSYQKAIFPAFAAIGGMVVPALIYWFINRDYPEYQQGWAIPMATDIAFALGIVALLSKQVPATLKVFLLALAIIDDIGAIIVIALFFSNELSMLALIIASIAIMILITMNRYKVTGIIHYVIVGTILWASVLKSGVHATLAGVIIGFCIPLRGKKGETPLHDLEHTLAPWCAFAILPLFAFSNAGVSLAGMSLAKLTSPLPLGITLGLLIGKPVGVFSFCYLAVRAGLAKLPEGINFKQVFAIAVLCGIGFTMSVFIAGLSFGEEHPDETILALSRLGILIGTSIAAIVGYILLKKTTNKPLVQAG</sequence>
<organism>
    <name type="scientific">Haemophilus ducreyi (strain 35000HP / ATCC 700724)</name>
    <dbReference type="NCBI Taxonomy" id="233412"/>
    <lineage>
        <taxon>Bacteria</taxon>
        <taxon>Pseudomonadati</taxon>
        <taxon>Pseudomonadota</taxon>
        <taxon>Gammaproteobacteria</taxon>
        <taxon>Pasteurellales</taxon>
        <taxon>Pasteurellaceae</taxon>
        <taxon>Haemophilus</taxon>
    </lineage>
</organism>
<accession>Q7VN39</accession>
<protein>
    <recommendedName>
        <fullName evidence="1">Na(+)/H(+) antiporter NhaA</fullName>
    </recommendedName>
    <alternativeName>
        <fullName evidence="1">Sodium/proton antiporter NhaA</fullName>
    </alternativeName>
</protein>
<keyword id="KW-0050">Antiport</keyword>
<keyword id="KW-0997">Cell inner membrane</keyword>
<keyword id="KW-1003">Cell membrane</keyword>
<keyword id="KW-0406">Ion transport</keyword>
<keyword id="KW-0472">Membrane</keyword>
<keyword id="KW-1185">Reference proteome</keyword>
<keyword id="KW-0915">Sodium</keyword>
<keyword id="KW-0739">Sodium transport</keyword>
<keyword id="KW-0812">Transmembrane</keyword>
<keyword id="KW-1133">Transmembrane helix</keyword>
<keyword id="KW-0813">Transport</keyword>
<evidence type="ECO:0000255" key="1">
    <source>
        <dbReference type="HAMAP-Rule" id="MF_01844"/>
    </source>
</evidence>
<reference key="1">
    <citation type="submission" date="2003-06" db="EMBL/GenBank/DDBJ databases">
        <title>The complete genome sequence of Haemophilus ducreyi.</title>
        <authorList>
            <person name="Munson R.S. Jr."/>
            <person name="Ray W.C."/>
            <person name="Mahairas G."/>
            <person name="Sabo P."/>
            <person name="Mungur R."/>
            <person name="Johnson L."/>
            <person name="Nguyen D."/>
            <person name="Wang J."/>
            <person name="Forst C."/>
            <person name="Hood L."/>
        </authorList>
    </citation>
    <scope>NUCLEOTIDE SEQUENCE [LARGE SCALE GENOMIC DNA]</scope>
    <source>
        <strain>35000HP / ATCC 700724</strain>
    </source>
</reference>
<comment type="function">
    <text evidence="1">Na(+)/H(+) antiporter that extrudes sodium in exchange for external protons.</text>
</comment>
<comment type="catalytic activity">
    <reaction evidence="1">
        <text>Na(+)(in) + 2 H(+)(out) = Na(+)(out) + 2 H(+)(in)</text>
        <dbReference type="Rhea" id="RHEA:29251"/>
        <dbReference type="ChEBI" id="CHEBI:15378"/>
        <dbReference type="ChEBI" id="CHEBI:29101"/>
    </reaction>
    <physiologicalReaction direction="left-to-right" evidence="1">
        <dbReference type="Rhea" id="RHEA:29252"/>
    </physiologicalReaction>
</comment>
<comment type="subcellular location">
    <subcellularLocation>
        <location evidence="1">Cell inner membrane</location>
        <topology evidence="1">Multi-pass membrane protein</topology>
    </subcellularLocation>
</comment>
<comment type="similarity">
    <text evidence="1">Belongs to the NhaA Na(+)/H(+) (TC 2.A.33) antiporter family.</text>
</comment>
<gene>
    <name evidence="1" type="primary">nhaA</name>
    <name type="ordered locus">HD_0747</name>
</gene>
<feature type="chain" id="PRO_0000334312" description="Na(+)/H(+) antiporter NhaA">
    <location>
        <begin position="1"/>
        <end position="394"/>
    </location>
</feature>
<feature type="transmembrane region" description="Helical" evidence="1">
    <location>
        <begin position="14"/>
        <end position="34"/>
    </location>
</feature>
<feature type="transmembrane region" description="Helical" evidence="1">
    <location>
        <begin position="59"/>
        <end position="79"/>
    </location>
</feature>
<feature type="transmembrane region" description="Helical" evidence="1">
    <location>
        <begin position="95"/>
        <end position="115"/>
    </location>
</feature>
<feature type="transmembrane region" description="Helical" evidence="1">
    <location>
        <begin position="125"/>
        <end position="145"/>
    </location>
</feature>
<feature type="transmembrane region" description="Helical" evidence="1">
    <location>
        <begin position="155"/>
        <end position="175"/>
    </location>
</feature>
<feature type="transmembrane region" description="Helical" evidence="1">
    <location>
        <begin position="177"/>
        <end position="197"/>
    </location>
</feature>
<feature type="transmembrane region" description="Helical" evidence="1">
    <location>
        <begin position="204"/>
        <end position="224"/>
    </location>
</feature>
<feature type="transmembrane region" description="Helical" evidence="1">
    <location>
        <begin position="258"/>
        <end position="278"/>
    </location>
</feature>
<feature type="transmembrane region" description="Helical" evidence="1">
    <location>
        <begin position="292"/>
        <end position="312"/>
    </location>
</feature>
<feature type="transmembrane region" description="Helical" evidence="1">
    <location>
        <begin position="328"/>
        <end position="348"/>
    </location>
</feature>
<feature type="transmembrane region" description="Helical" evidence="1">
    <location>
        <begin position="362"/>
        <end position="382"/>
    </location>
</feature>